<gene>
    <name type="ORF">ARB_01345</name>
</gene>
<dbReference type="EC" id="3.4.-.-" evidence="6"/>
<dbReference type="EMBL" id="ABSU01000019">
    <property type="protein sequence ID" value="EFE31746.1"/>
    <property type="molecule type" value="Genomic_DNA"/>
</dbReference>
<dbReference type="RefSeq" id="XP_003012386.1">
    <property type="nucleotide sequence ID" value="XM_003012340.1"/>
</dbReference>
<dbReference type="SMR" id="D4AYS6"/>
<dbReference type="ESTHER" id="triec-f2pwm2">
    <property type="family name" value="Prolylcarboxypeptidase"/>
</dbReference>
<dbReference type="GeneID" id="9520035"/>
<dbReference type="KEGG" id="abe:ARB_01345"/>
<dbReference type="eggNOG" id="KOG2182">
    <property type="taxonomic scope" value="Eukaryota"/>
</dbReference>
<dbReference type="HOGENOM" id="CLU_023630_0_0_1"/>
<dbReference type="OMA" id="HYAEHFG"/>
<dbReference type="Proteomes" id="UP000008866">
    <property type="component" value="Unassembled WGS sequence"/>
</dbReference>
<dbReference type="GO" id="GO:0005576">
    <property type="term" value="C:extracellular region"/>
    <property type="evidence" value="ECO:0007669"/>
    <property type="project" value="UniProtKB-SubCell"/>
</dbReference>
<dbReference type="GO" id="GO:0016020">
    <property type="term" value="C:membrane"/>
    <property type="evidence" value="ECO:0007669"/>
    <property type="project" value="UniProtKB-SubCell"/>
</dbReference>
<dbReference type="GO" id="GO:0004180">
    <property type="term" value="F:carboxypeptidase activity"/>
    <property type="evidence" value="ECO:0007669"/>
    <property type="project" value="UniProtKB-KW"/>
</dbReference>
<dbReference type="GO" id="GO:0008239">
    <property type="term" value="F:dipeptidyl-peptidase activity"/>
    <property type="evidence" value="ECO:0007669"/>
    <property type="project" value="TreeGrafter"/>
</dbReference>
<dbReference type="GO" id="GO:0070008">
    <property type="term" value="F:serine-type exopeptidase activity"/>
    <property type="evidence" value="ECO:0007669"/>
    <property type="project" value="InterPro"/>
</dbReference>
<dbReference type="GO" id="GO:0006508">
    <property type="term" value="P:proteolysis"/>
    <property type="evidence" value="ECO:0007669"/>
    <property type="project" value="UniProtKB-KW"/>
</dbReference>
<dbReference type="FunFam" id="3.40.50.1820:FF:000251">
    <property type="entry name" value="Extracelular serine carboxypeptidase, putative"/>
    <property type="match status" value="1"/>
</dbReference>
<dbReference type="Gene3D" id="3.40.50.1820">
    <property type="entry name" value="alpha/beta hydrolase"/>
    <property type="match status" value="2"/>
</dbReference>
<dbReference type="InterPro" id="IPR029058">
    <property type="entry name" value="AB_hydrolase_fold"/>
</dbReference>
<dbReference type="InterPro" id="IPR008758">
    <property type="entry name" value="Peptidase_S28"/>
</dbReference>
<dbReference type="PANTHER" id="PTHR11010">
    <property type="entry name" value="PROTEASE S28 PRO-X CARBOXYPEPTIDASE-RELATED"/>
    <property type="match status" value="1"/>
</dbReference>
<dbReference type="PANTHER" id="PTHR11010:SF117">
    <property type="entry name" value="SERINE PROTEASE 16"/>
    <property type="match status" value="1"/>
</dbReference>
<dbReference type="Pfam" id="PF05577">
    <property type="entry name" value="Peptidase_S28"/>
    <property type="match status" value="1"/>
</dbReference>
<dbReference type="SUPFAM" id="SSF53474">
    <property type="entry name" value="alpha/beta-Hydrolases"/>
    <property type="match status" value="1"/>
</dbReference>
<feature type="signal peptide" evidence="1">
    <location>
        <begin position="1"/>
        <end position="17"/>
    </location>
</feature>
<feature type="chain" id="PRO_0000434502" description="Probable extracellular serine carboxypeptidase" evidence="1">
    <location>
        <begin position="18"/>
        <end position="716"/>
    </location>
</feature>
<feature type="transmembrane region" description="Helical" evidence="1">
    <location>
        <begin position="652"/>
        <end position="672"/>
    </location>
</feature>
<feature type="region of interest" description="Disordered" evidence="3">
    <location>
        <begin position="617"/>
        <end position="636"/>
    </location>
</feature>
<feature type="active site" description="Charge relay system" evidence="1">
    <location>
        <position position="188"/>
    </location>
</feature>
<feature type="active site" description="Charge relay system" evidence="1">
    <location>
        <position position="466"/>
    </location>
</feature>
<feature type="glycosylation site" description="N-linked (GlcNAc...) asparagine" evidence="2">
    <location>
        <position position="143"/>
    </location>
</feature>
<feature type="glycosylation site" description="N-linked (GlcNAc...) asparagine" evidence="2">
    <location>
        <position position="174"/>
    </location>
</feature>
<feature type="glycosylation site" description="N-linked (GlcNAc...) asparagine" evidence="2">
    <location>
        <position position="258"/>
    </location>
</feature>
<feature type="glycosylation site" description="N-linked (GlcNAc...) asparagine" evidence="2">
    <location>
        <position position="354"/>
    </location>
</feature>
<feature type="glycosylation site" description="N-linked (GlcNAc...) asparagine" evidence="2">
    <location>
        <position position="507"/>
    </location>
</feature>
<feature type="glycosylation site" description="N-linked (GlcNAc...) asparagine" evidence="2">
    <location>
        <position position="550"/>
    </location>
</feature>
<keyword id="KW-0121">Carboxypeptidase</keyword>
<keyword id="KW-0325">Glycoprotein</keyword>
<keyword id="KW-0378">Hydrolase</keyword>
<keyword id="KW-0472">Membrane</keyword>
<keyword id="KW-0645">Protease</keyword>
<keyword id="KW-1185">Reference proteome</keyword>
<keyword id="KW-0964">Secreted</keyword>
<keyword id="KW-0732">Signal</keyword>
<keyword id="KW-0812">Transmembrane</keyword>
<keyword id="KW-1133">Transmembrane helix</keyword>
<comment type="subcellular location">
    <subcellularLocation>
        <location evidence="1">Membrane</location>
        <topology evidence="1">Single-pass membrane protein</topology>
    </subcellularLocation>
    <subcellularLocation>
        <location evidence="4 5">Secreted</location>
    </subcellularLocation>
</comment>
<comment type="similarity">
    <text evidence="6">Belongs to the peptidase S28 family.</text>
</comment>
<protein>
    <recommendedName>
        <fullName evidence="6">Probable extracellular serine carboxypeptidase</fullName>
        <ecNumber evidence="6">3.4.-.-</ecNumber>
    </recommendedName>
</protein>
<name>A1345_ARTBC</name>
<sequence length="716" mass="79307">MVKLTACLLLLVAAVQAKLPVTPISQLRAESHRNKALVARSQDVNAAFPAHTIQIPIDHFPKSSRYEPHTTEKFNLRYWFDASHYKEGGPVIILHGGETSGEGRIPFLQKGILAQLAQATNGIGVIMEHRYYGGSLPTPDFSNKSLRFLTTEQALADTAYFSKNIKFPGLEKYNLTAPGTAHILYGGSYAGGQVAFLRTQYPDIFWGAISSSGVTKAIYDYWQYFEPIRQEAPQDCVHVTQNFVDIVDNIIINGKNANTTRELKNLFGLGRLRDADFANALSSGITGWQSTNWDPAISGKSFYQYCGEITSDRYLYPVTAQQKASAKRIIEAGGHGREAPEILPQLLNFVGWLNKSTLESCSGQGQTAEECLNSYDEAFYKQDNADQSWRAWPWQYCNEWGYLQTGSGAPKNIRPVISRLIDLPYTSNICKQAFGITKPSNVDLVNKYGAFDIEYDRLAFVDGGSDPWKEAGVHATAARKRGTSTNKPFILIPDAVHHWDENGLYPNETTAELPPQRIKEVQAEEARFVKEWMKVHIYIDHQTFTGIRKNLSLMNDELPAHVLPFLVPPTSTKNAVSPSHEQPADPRIAISSWACAGLSVVVARICCSPIGYRCPSRDLAAQPSKSKKDRRGQQLSPAAGDPIVCTGLTTRLGFVSFLVFAFSSFTFIPDIETLKAAVLRSGEVLWSHDAAAECCCVLSVLFAASCTESRKLRLDI</sequence>
<accession>D4AYS6</accession>
<proteinExistence type="evidence at protein level"/>
<organism>
    <name type="scientific">Arthroderma benhamiae (strain ATCC MYA-4681 / CBS 112371)</name>
    <name type="common">Trichophyton mentagrophytes</name>
    <dbReference type="NCBI Taxonomy" id="663331"/>
    <lineage>
        <taxon>Eukaryota</taxon>
        <taxon>Fungi</taxon>
        <taxon>Dikarya</taxon>
        <taxon>Ascomycota</taxon>
        <taxon>Pezizomycotina</taxon>
        <taxon>Eurotiomycetes</taxon>
        <taxon>Eurotiomycetidae</taxon>
        <taxon>Onygenales</taxon>
        <taxon>Arthrodermataceae</taxon>
        <taxon>Trichophyton</taxon>
    </lineage>
</organism>
<reference key="1">
    <citation type="journal article" date="2011" name="Genome Biol.">
        <title>Comparative and functional genomics provide insights into the pathogenicity of dermatophytic fungi.</title>
        <authorList>
            <person name="Burmester A."/>
            <person name="Shelest E."/>
            <person name="Gloeckner G."/>
            <person name="Heddergott C."/>
            <person name="Schindler S."/>
            <person name="Staib P."/>
            <person name="Heidel A."/>
            <person name="Felder M."/>
            <person name="Petzold A."/>
            <person name="Szafranski K."/>
            <person name="Feuermann M."/>
            <person name="Pedruzzi I."/>
            <person name="Priebe S."/>
            <person name="Groth M."/>
            <person name="Winkler R."/>
            <person name="Li W."/>
            <person name="Kniemeyer O."/>
            <person name="Schroeckh V."/>
            <person name="Hertweck C."/>
            <person name="Hube B."/>
            <person name="White T.C."/>
            <person name="Platzer M."/>
            <person name="Guthke R."/>
            <person name="Heitman J."/>
            <person name="Woestemeyer J."/>
            <person name="Zipfel P.F."/>
            <person name="Monod M."/>
            <person name="Brakhage A.A."/>
        </authorList>
    </citation>
    <scope>NUCLEOTIDE SEQUENCE [LARGE SCALE GENOMIC DNA]</scope>
    <scope>IDENTIFICATION BY MASS SPECTROMETRY</scope>
    <scope>SUBCELLULAR LOCATION</scope>
    <source>
        <strain>ATCC MYA-4681 / CBS 112371</strain>
    </source>
</reference>
<reference key="2">
    <citation type="journal article" date="2011" name="Proteomics">
        <title>Identification of novel secreted proteases during extracellular proteolysis by dermatophytes at acidic pH.</title>
        <authorList>
            <person name="Sriranganadane D."/>
            <person name="Waridel P."/>
            <person name="Salamin K."/>
            <person name="Feuermann M."/>
            <person name="Mignon B."/>
            <person name="Staib P."/>
            <person name="Neuhaus J.M."/>
            <person name="Quadroni M."/>
            <person name="Monod M."/>
        </authorList>
    </citation>
    <scope>IDENTIFICATION BY MASS SPECTROMETRY</scope>
    <scope>SUBCELLULAR LOCATION</scope>
</reference>
<evidence type="ECO:0000255" key="1"/>
<evidence type="ECO:0000255" key="2">
    <source>
        <dbReference type="PROSITE-ProRule" id="PRU00498"/>
    </source>
</evidence>
<evidence type="ECO:0000256" key="3">
    <source>
        <dbReference type="SAM" id="MobiDB-lite"/>
    </source>
</evidence>
<evidence type="ECO:0000269" key="4">
    <source>
    </source>
</evidence>
<evidence type="ECO:0000269" key="5">
    <source>
    </source>
</evidence>
<evidence type="ECO:0000305" key="6"/>